<dbReference type="EC" id="1.7.1.13" evidence="1"/>
<dbReference type="EMBL" id="CP000764">
    <property type="protein sequence ID" value="ABS21393.1"/>
    <property type="molecule type" value="Genomic_DNA"/>
</dbReference>
<dbReference type="RefSeq" id="WP_011984146.1">
    <property type="nucleotide sequence ID" value="NC_009674.1"/>
</dbReference>
<dbReference type="SMR" id="A7GMN5"/>
<dbReference type="STRING" id="315749.Bcer98_1067"/>
<dbReference type="GeneID" id="33896424"/>
<dbReference type="KEGG" id="bcy:Bcer98_1067"/>
<dbReference type="eggNOG" id="COG0780">
    <property type="taxonomic scope" value="Bacteria"/>
</dbReference>
<dbReference type="HOGENOM" id="CLU_102489_0_1_9"/>
<dbReference type="OrthoDB" id="9795077at2"/>
<dbReference type="UniPathway" id="UPA00392"/>
<dbReference type="Proteomes" id="UP000002300">
    <property type="component" value="Chromosome"/>
</dbReference>
<dbReference type="GO" id="GO:0005737">
    <property type="term" value="C:cytoplasm"/>
    <property type="evidence" value="ECO:0007669"/>
    <property type="project" value="UniProtKB-SubCell"/>
</dbReference>
<dbReference type="GO" id="GO:0033739">
    <property type="term" value="F:preQ1 synthase activity"/>
    <property type="evidence" value="ECO:0007669"/>
    <property type="project" value="UniProtKB-UniRule"/>
</dbReference>
<dbReference type="GO" id="GO:0008616">
    <property type="term" value="P:queuosine biosynthetic process"/>
    <property type="evidence" value="ECO:0007669"/>
    <property type="project" value="UniProtKB-UniRule"/>
</dbReference>
<dbReference type="GO" id="GO:0006400">
    <property type="term" value="P:tRNA modification"/>
    <property type="evidence" value="ECO:0007669"/>
    <property type="project" value="UniProtKB-UniRule"/>
</dbReference>
<dbReference type="Gene3D" id="3.30.1130.10">
    <property type="match status" value="1"/>
</dbReference>
<dbReference type="HAMAP" id="MF_00818">
    <property type="entry name" value="QueF_type1"/>
    <property type="match status" value="1"/>
</dbReference>
<dbReference type="InterPro" id="IPR043133">
    <property type="entry name" value="GTP-CH-I_C/QueF"/>
</dbReference>
<dbReference type="InterPro" id="IPR050084">
    <property type="entry name" value="NADPH_dep_7-cyano-7-deazaG_red"/>
</dbReference>
<dbReference type="InterPro" id="IPR029500">
    <property type="entry name" value="QueF"/>
</dbReference>
<dbReference type="InterPro" id="IPR016856">
    <property type="entry name" value="QueF_type1"/>
</dbReference>
<dbReference type="NCBIfam" id="TIGR03139">
    <property type="entry name" value="QueF-II"/>
    <property type="match status" value="1"/>
</dbReference>
<dbReference type="PANTHER" id="PTHR34354">
    <property type="entry name" value="NADPH-DEPENDENT 7-CYANO-7-DEAZAGUANINE REDUCTASE"/>
    <property type="match status" value="1"/>
</dbReference>
<dbReference type="PANTHER" id="PTHR34354:SF1">
    <property type="entry name" value="NADPH-DEPENDENT 7-CYANO-7-DEAZAGUANINE REDUCTASE"/>
    <property type="match status" value="1"/>
</dbReference>
<dbReference type="Pfam" id="PF14489">
    <property type="entry name" value="QueF"/>
    <property type="match status" value="1"/>
</dbReference>
<dbReference type="PIRSF" id="PIRSF027377">
    <property type="entry name" value="Nitrile_oxidored_QueF"/>
    <property type="match status" value="1"/>
</dbReference>
<dbReference type="SUPFAM" id="SSF55620">
    <property type="entry name" value="Tetrahydrobiopterin biosynthesis enzymes-like"/>
    <property type="match status" value="1"/>
</dbReference>
<name>QUEF_BACCN</name>
<evidence type="ECO:0000255" key="1">
    <source>
        <dbReference type="HAMAP-Rule" id="MF_00818"/>
    </source>
</evidence>
<comment type="function">
    <text evidence="1">Catalyzes the NADPH-dependent reduction of 7-cyano-7-deazaguanine (preQ0) to 7-aminomethyl-7-deazaguanine (preQ1).</text>
</comment>
<comment type="catalytic activity">
    <reaction evidence="1">
        <text>7-aminomethyl-7-carbaguanine + 2 NADP(+) = 7-cyano-7-deazaguanine + 2 NADPH + 3 H(+)</text>
        <dbReference type="Rhea" id="RHEA:13409"/>
        <dbReference type="ChEBI" id="CHEBI:15378"/>
        <dbReference type="ChEBI" id="CHEBI:45075"/>
        <dbReference type="ChEBI" id="CHEBI:57783"/>
        <dbReference type="ChEBI" id="CHEBI:58349"/>
        <dbReference type="ChEBI" id="CHEBI:58703"/>
        <dbReference type="EC" id="1.7.1.13"/>
    </reaction>
</comment>
<comment type="pathway">
    <text evidence="1">tRNA modification; tRNA-queuosine biosynthesis.</text>
</comment>
<comment type="subcellular location">
    <subcellularLocation>
        <location evidence="1">Cytoplasm</location>
    </subcellularLocation>
</comment>
<comment type="similarity">
    <text evidence="1">Belongs to the GTP cyclohydrolase I family. QueF type 1 subfamily.</text>
</comment>
<accession>A7GMN5</accession>
<proteinExistence type="inferred from homology"/>
<feature type="chain" id="PRO_1000083833" description="NADPH-dependent 7-cyano-7-deazaguanine reductase">
    <location>
        <begin position="1"/>
        <end position="165"/>
    </location>
</feature>
<feature type="active site" description="Thioimide intermediate" evidence="1">
    <location>
        <position position="56"/>
    </location>
</feature>
<feature type="active site" description="Proton donor" evidence="1">
    <location>
        <position position="63"/>
    </location>
</feature>
<feature type="binding site" evidence="1">
    <location>
        <begin position="78"/>
        <end position="80"/>
    </location>
    <ligand>
        <name>substrate</name>
    </ligand>
</feature>
<feature type="binding site" evidence="1">
    <location>
        <begin position="97"/>
        <end position="98"/>
    </location>
    <ligand>
        <name>substrate</name>
    </ligand>
</feature>
<keyword id="KW-0963">Cytoplasm</keyword>
<keyword id="KW-0521">NADP</keyword>
<keyword id="KW-0560">Oxidoreductase</keyword>
<keyword id="KW-0671">Queuosine biosynthesis</keyword>
<sequence>MAGRLDEDLKDVTLLGNQNTKYLFEYSPEILETFDNNHPNRDYFVKFNCPEFTSLCPKTGQPDFATIYISYIPEKKMVESKSLKLYLFSFRNHGDFHEDCMNVIMNDLIELMDPRYIEVWGKFTPRGGISIDPYCNYGRPGTKYEKMAEYRMMNHDLYPETVDNR</sequence>
<protein>
    <recommendedName>
        <fullName evidence="1">NADPH-dependent 7-cyano-7-deazaguanine reductase</fullName>
        <ecNumber evidence="1">1.7.1.13</ecNumber>
    </recommendedName>
    <alternativeName>
        <fullName evidence="1">7-cyano-7-carbaguanine reductase</fullName>
    </alternativeName>
    <alternativeName>
        <fullName evidence="1">NADPH-dependent nitrile oxidoreductase</fullName>
    </alternativeName>
    <alternativeName>
        <fullName evidence="1">PreQ(0) reductase</fullName>
    </alternativeName>
</protein>
<reference key="1">
    <citation type="journal article" date="2008" name="Chem. Biol. Interact.">
        <title>Extending the Bacillus cereus group genomics to putative food-borne pathogens of different toxicity.</title>
        <authorList>
            <person name="Lapidus A."/>
            <person name="Goltsman E."/>
            <person name="Auger S."/>
            <person name="Galleron N."/>
            <person name="Segurens B."/>
            <person name="Dossat C."/>
            <person name="Land M.L."/>
            <person name="Broussolle V."/>
            <person name="Brillard J."/>
            <person name="Guinebretiere M.-H."/>
            <person name="Sanchis V."/>
            <person name="Nguen-the C."/>
            <person name="Lereclus D."/>
            <person name="Richardson P."/>
            <person name="Wincker P."/>
            <person name="Weissenbach J."/>
            <person name="Ehrlich S.D."/>
            <person name="Sorokin A."/>
        </authorList>
    </citation>
    <scope>NUCLEOTIDE SEQUENCE [LARGE SCALE GENOMIC DNA]</scope>
    <source>
        <strain>DSM 22905 / CIP 110041 / 391-98 / NVH 391-98</strain>
    </source>
</reference>
<organism>
    <name type="scientific">Bacillus cytotoxicus (strain DSM 22905 / CIP 110041 / 391-98 / NVH 391-98)</name>
    <dbReference type="NCBI Taxonomy" id="315749"/>
    <lineage>
        <taxon>Bacteria</taxon>
        <taxon>Bacillati</taxon>
        <taxon>Bacillota</taxon>
        <taxon>Bacilli</taxon>
        <taxon>Bacillales</taxon>
        <taxon>Bacillaceae</taxon>
        <taxon>Bacillus</taxon>
        <taxon>Bacillus cereus group</taxon>
    </lineage>
</organism>
<gene>
    <name evidence="1" type="primary">queF</name>
    <name type="ordered locus">Bcer98_1067</name>
</gene>